<reference key="1">
    <citation type="journal article" date="1992" name="Mol. Cell. Biol.">
        <title>Transcriptional repression by a novel member of the bZIP family of transcription factors.</title>
        <authorList>
            <person name="Cowell I.G."/>
            <person name="Skinner A."/>
            <person name="Hurst H.C."/>
        </authorList>
    </citation>
    <scope>NUCLEOTIDE SEQUENCE [MRNA]</scope>
    <scope>FUNCTION</scope>
    <scope>SUBUNIT</scope>
    <scope>DNA-BINDING</scope>
    <source>
        <tissue>Placenta</tissue>
    </source>
</reference>
<reference key="2">
    <citation type="journal article" date="1995" name="Mol. Cell. Biol.">
        <title>Molecular cloning and characterization of NF-IL3A, a transcriptional activator of the human interleukin-3 promoter.</title>
        <authorList>
            <person name="Zhang W."/>
            <person name="Zhang J."/>
            <person name="Kornuc M."/>
            <person name="Kwan K."/>
            <person name="Frank R."/>
            <person name="Nimer S.D."/>
        </authorList>
    </citation>
    <scope>NUCLEOTIDE SEQUENCE [MRNA]</scope>
    <scope>FUNCTION</scope>
    <scope>INDUCTION</scope>
    <scope>DNA-BINDING</scope>
    <source>
        <tissue>T-cell</tissue>
    </source>
</reference>
<reference key="3">
    <citation type="submission" date="2006-09" db="EMBL/GenBank/DDBJ databases">
        <authorList>
            <consortium name="NHLBI resequencing and genotyping service (RS&amp;G)"/>
        </authorList>
    </citation>
    <scope>NUCLEOTIDE SEQUENCE [GENOMIC DNA]</scope>
</reference>
<reference key="4">
    <citation type="submission" date="2004-06" db="EMBL/GenBank/DDBJ databases">
        <title>Cloning of human full open reading frames in Gateway(TM) system entry vector (pDONR201).</title>
        <authorList>
            <person name="Ebert L."/>
            <person name="Schick M."/>
            <person name="Neubert P."/>
            <person name="Schatten R."/>
            <person name="Henze S."/>
            <person name="Korn B."/>
        </authorList>
    </citation>
    <scope>NUCLEOTIDE SEQUENCE [LARGE SCALE MRNA]</scope>
</reference>
<reference key="5">
    <citation type="journal article" date="2004" name="Nat. Genet.">
        <title>Complete sequencing and characterization of 21,243 full-length human cDNAs.</title>
        <authorList>
            <person name="Ota T."/>
            <person name="Suzuki Y."/>
            <person name="Nishikawa T."/>
            <person name="Otsuki T."/>
            <person name="Sugiyama T."/>
            <person name="Irie R."/>
            <person name="Wakamatsu A."/>
            <person name="Hayashi K."/>
            <person name="Sato H."/>
            <person name="Nagai K."/>
            <person name="Kimura K."/>
            <person name="Makita H."/>
            <person name="Sekine M."/>
            <person name="Obayashi M."/>
            <person name="Nishi T."/>
            <person name="Shibahara T."/>
            <person name="Tanaka T."/>
            <person name="Ishii S."/>
            <person name="Yamamoto J."/>
            <person name="Saito K."/>
            <person name="Kawai Y."/>
            <person name="Isono Y."/>
            <person name="Nakamura Y."/>
            <person name="Nagahari K."/>
            <person name="Murakami K."/>
            <person name="Yasuda T."/>
            <person name="Iwayanagi T."/>
            <person name="Wagatsuma M."/>
            <person name="Shiratori A."/>
            <person name="Sudo H."/>
            <person name="Hosoiri T."/>
            <person name="Kaku Y."/>
            <person name="Kodaira H."/>
            <person name="Kondo H."/>
            <person name="Sugawara M."/>
            <person name="Takahashi M."/>
            <person name="Kanda K."/>
            <person name="Yokoi T."/>
            <person name="Furuya T."/>
            <person name="Kikkawa E."/>
            <person name="Omura Y."/>
            <person name="Abe K."/>
            <person name="Kamihara K."/>
            <person name="Katsuta N."/>
            <person name="Sato K."/>
            <person name="Tanikawa M."/>
            <person name="Yamazaki M."/>
            <person name="Ninomiya K."/>
            <person name="Ishibashi T."/>
            <person name="Yamashita H."/>
            <person name="Murakawa K."/>
            <person name="Fujimori K."/>
            <person name="Tanai H."/>
            <person name="Kimata M."/>
            <person name="Watanabe M."/>
            <person name="Hiraoka S."/>
            <person name="Chiba Y."/>
            <person name="Ishida S."/>
            <person name="Ono Y."/>
            <person name="Takiguchi S."/>
            <person name="Watanabe S."/>
            <person name="Yosida M."/>
            <person name="Hotuta T."/>
            <person name="Kusano J."/>
            <person name="Kanehori K."/>
            <person name="Takahashi-Fujii A."/>
            <person name="Hara H."/>
            <person name="Tanase T.-O."/>
            <person name="Nomura Y."/>
            <person name="Togiya S."/>
            <person name="Komai F."/>
            <person name="Hara R."/>
            <person name="Takeuchi K."/>
            <person name="Arita M."/>
            <person name="Imose N."/>
            <person name="Musashino K."/>
            <person name="Yuuki H."/>
            <person name="Oshima A."/>
            <person name="Sasaki N."/>
            <person name="Aotsuka S."/>
            <person name="Yoshikawa Y."/>
            <person name="Matsunawa H."/>
            <person name="Ichihara T."/>
            <person name="Shiohata N."/>
            <person name="Sano S."/>
            <person name="Moriya S."/>
            <person name="Momiyama H."/>
            <person name="Satoh N."/>
            <person name="Takami S."/>
            <person name="Terashima Y."/>
            <person name="Suzuki O."/>
            <person name="Nakagawa S."/>
            <person name="Senoh A."/>
            <person name="Mizoguchi H."/>
            <person name="Goto Y."/>
            <person name="Shimizu F."/>
            <person name="Wakebe H."/>
            <person name="Hishigaki H."/>
            <person name="Watanabe T."/>
            <person name="Sugiyama A."/>
            <person name="Takemoto M."/>
            <person name="Kawakami B."/>
            <person name="Yamazaki M."/>
            <person name="Watanabe K."/>
            <person name="Kumagai A."/>
            <person name="Itakura S."/>
            <person name="Fukuzumi Y."/>
            <person name="Fujimori Y."/>
            <person name="Komiyama M."/>
            <person name="Tashiro H."/>
            <person name="Tanigami A."/>
            <person name="Fujiwara T."/>
            <person name="Ono T."/>
            <person name="Yamada K."/>
            <person name="Fujii Y."/>
            <person name="Ozaki K."/>
            <person name="Hirao M."/>
            <person name="Ohmori Y."/>
            <person name="Kawabata A."/>
            <person name="Hikiji T."/>
            <person name="Kobatake N."/>
            <person name="Inagaki H."/>
            <person name="Ikema Y."/>
            <person name="Okamoto S."/>
            <person name="Okitani R."/>
            <person name="Kawakami T."/>
            <person name="Noguchi S."/>
            <person name="Itoh T."/>
            <person name="Shigeta K."/>
            <person name="Senba T."/>
            <person name="Matsumura K."/>
            <person name="Nakajima Y."/>
            <person name="Mizuno T."/>
            <person name="Morinaga M."/>
            <person name="Sasaki M."/>
            <person name="Togashi T."/>
            <person name="Oyama M."/>
            <person name="Hata H."/>
            <person name="Watanabe M."/>
            <person name="Komatsu T."/>
            <person name="Mizushima-Sugano J."/>
            <person name="Satoh T."/>
            <person name="Shirai Y."/>
            <person name="Takahashi Y."/>
            <person name="Nakagawa K."/>
            <person name="Okumura K."/>
            <person name="Nagase T."/>
            <person name="Nomura N."/>
            <person name="Kikuchi H."/>
            <person name="Masuho Y."/>
            <person name="Yamashita R."/>
            <person name="Nakai K."/>
            <person name="Yada T."/>
            <person name="Nakamura Y."/>
            <person name="Ohara O."/>
            <person name="Isogai T."/>
            <person name="Sugano S."/>
        </authorList>
    </citation>
    <scope>NUCLEOTIDE SEQUENCE [LARGE SCALE MRNA]</scope>
    <source>
        <tissue>Liver</tissue>
    </source>
</reference>
<reference key="6">
    <citation type="journal article" date="2004" name="Nature">
        <title>DNA sequence and analysis of human chromosome 9.</title>
        <authorList>
            <person name="Humphray S.J."/>
            <person name="Oliver K."/>
            <person name="Hunt A.R."/>
            <person name="Plumb R.W."/>
            <person name="Loveland J.E."/>
            <person name="Howe K.L."/>
            <person name="Andrews T.D."/>
            <person name="Searle S."/>
            <person name="Hunt S.E."/>
            <person name="Scott C.E."/>
            <person name="Jones M.C."/>
            <person name="Ainscough R."/>
            <person name="Almeida J.P."/>
            <person name="Ambrose K.D."/>
            <person name="Ashwell R.I.S."/>
            <person name="Babbage A.K."/>
            <person name="Babbage S."/>
            <person name="Bagguley C.L."/>
            <person name="Bailey J."/>
            <person name="Banerjee R."/>
            <person name="Barker D.J."/>
            <person name="Barlow K.F."/>
            <person name="Bates K."/>
            <person name="Beasley H."/>
            <person name="Beasley O."/>
            <person name="Bird C.P."/>
            <person name="Bray-Allen S."/>
            <person name="Brown A.J."/>
            <person name="Brown J.Y."/>
            <person name="Burford D."/>
            <person name="Burrill W."/>
            <person name="Burton J."/>
            <person name="Carder C."/>
            <person name="Carter N.P."/>
            <person name="Chapman J.C."/>
            <person name="Chen Y."/>
            <person name="Clarke G."/>
            <person name="Clark S.Y."/>
            <person name="Clee C.M."/>
            <person name="Clegg S."/>
            <person name="Collier R.E."/>
            <person name="Corby N."/>
            <person name="Crosier M."/>
            <person name="Cummings A.T."/>
            <person name="Davies J."/>
            <person name="Dhami P."/>
            <person name="Dunn M."/>
            <person name="Dutta I."/>
            <person name="Dyer L.W."/>
            <person name="Earthrowl M.E."/>
            <person name="Faulkner L."/>
            <person name="Fleming C.J."/>
            <person name="Frankish A."/>
            <person name="Frankland J.A."/>
            <person name="French L."/>
            <person name="Fricker D.G."/>
            <person name="Garner P."/>
            <person name="Garnett J."/>
            <person name="Ghori J."/>
            <person name="Gilbert J.G.R."/>
            <person name="Glison C."/>
            <person name="Grafham D.V."/>
            <person name="Gribble S."/>
            <person name="Griffiths C."/>
            <person name="Griffiths-Jones S."/>
            <person name="Grocock R."/>
            <person name="Guy J."/>
            <person name="Hall R.E."/>
            <person name="Hammond S."/>
            <person name="Harley J.L."/>
            <person name="Harrison E.S.I."/>
            <person name="Hart E.A."/>
            <person name="Heath P.D."/>
            <person name="Henderson C.D."/>
            <person name="Hopkins B.L."/>
            <person name="Howard P.J."/>
            <person name="Howden P.J."/>
            <person name="Huckle E."/>
            <person name="Johnson C."/>
            <person name="Johnson D."/>
            <person name="Joy A.A."/>
            <person name="Kay M."/>
            <person name="Keenan S."/>
            <person name="Kershaw J.K."/>
            <person name="Kimberley A.M."/>
            <person name="King A."/>
            <person name="Knights A."/>
            <person name="Laird G.K."/>
            <person name="Langford C."/>
            <person name="Lawlor S."/>
            <person name="Leongamornlert D.A."/>
            <person name="Leversha M."/>
            <person name="Lloyd C."/>
            <person name="Lloyd D.M."/>
            <person name="Lovell J."/>
            <person name="Martin S."/>
            <person name="Mashreghi-Mohammadi M."/>
            <person name="Matthews L."/>
            <person name="McLaren S."/>
            <person name="McLay K.E."/>
            <person name="McMurray A."/>
            <person name="Milne S."/>
            <person name="Nickerson T."/>
            <person name="Nisbett J."/>
            <person name="Nordsiek G."/>
            <person name="Pearce A.V."/>
            <person name="Peck A.I."/>
            <person name="Porter K.M."/>
            <person name="Pandian R."/>
            <person name="Pelan S."/>
            <person name="Phillimore B."/>
            <person name="Povey S."/>
            <person name="Ramsey Y."/>
            <person name="Rand V."/>
            <person name="Scharfe M."/>
            <person name="Sehra H.K."/>
            <person name="Shownkeen R."/>
            <person name="Sims S.K."/>
            <person name="Skuce C.D."/>
            <person name="Smith M."/>
            <person name="Steward C.A."/>
            <person name="Swarbreck D."/>
            <person name="Sycamore N."/>
            <person name="Tester J."/>
            <person name="Thorpe A."/>
            <person name="Tracey A."/>
            <person name="Tromans A."/>
            <person name="Thomas D.W."/>
            <person name="Wall M."/>
            <person name="Wallis J.M."/>
            <person name="West A.P."/>
            <person name="Whitehead S.L."/>
            <person name="Willey D.L."/>
            <person name="Williams S.A."/>
            <person name="Wilming L."/>
            <person name="Wray P.W."/>
            <person name="Young L."/>
            <person name="Ashurst J.L."/>
            <person name="Coulson A."/>
            <person name="Blocker H."/>
            <person name="Durbin R.M."/>
            <person name="Sulston J.E."/>
            <person name="Hubbard T."/>
            <person name="Jackson M.J."/>
            <person name="Bentley D.R."/>
            <person name="Beck S."/>
            <person name="Rogers J."/>
            <person name="Dunham I."/>
        </authorList>
    </citation>
    <scope>NUCLEOTIDE SEQUENCE [LARGE SCALE GENOMIC DNA]</scope>
</reference>
<reference key="7">
    <citation type="submission" date="2005-07" db="EMBL/GenBank/DDBJ databases">
        <authorList>
            <person name="Mural R.J."/>
            <person name="Istrail S."/>
            <person name="Sutton G.G."/>
            <person name="Florea L."/>
            <person name="Halpern A.L."/>
            <person name="Mobarry C.M."/>
            <person name="Lippert R."/>
            <person name="Walenz B."/>
            <person name="Shatkay H."/>
            <person name="Dew I."/>
            <person name="Miller J.R."/>
            <person name="Flanigan M.J."/>
            <person name="Edwards N.J."/>
            <person name="Bolanos R."/>
            <person name="Fasulo D."/>
            <person name="Halldorsson B.V."/>
            <person name="Hannenhalli S."/>
            <person name="Turner R."/>
            <person name="Yooseph S."/>
            <person name="Lu F."/>
            <person name="Nusskern D.R."/>
            <person name="Shue B.C."/>
            <person name="Zheng X.H."/>
            <person name="Zhong F."/>
            <person name="Delcher A.L."/>
            <person name="Huson D.H."/>
            <person name="Kravitz S.A."/>
            <person name="Mouchard L."/>
            <person name="Reinert K."/>
            <person name="Remington K.A."/>
            <person name="Clark A.G."/>
            <person name="Waterman M.S."/>
            <person name="Eichler E.E."/>
            <person name="Adams M.D."/>
            <person name="Hunkapiller M.W."/>
            <person name="Myers E.W."/>
            <person name="Venter J.C."/>
        </authorList>
    </citation>
    <scope>NUCLEOTIDE SEQUENCE [LARGE SCALE GENOMIC DNA]</scope>
</reference>
<reference key="8">
    <citation type="journal article" date="2004" name="Genome Res.">
        <title>The status, quality, and expansion of the NIH full-length cDNA project: the Mammalian Gene Collection (MGC).</title>
        <authorList>
            <consortium name="The MGC Project Team"/>
        </authorList>
    </citation>
    <scope>NUCLEOTIDE SEQUENCE [LARGE SCALE MRNA]</scope>
    <source>
        <tissue>Placenta</tissue>
    </source>
</reference>
<reference key="9">
    <citation type="journal article" date="1996" name="Nucleic Acids Res.">
        <title>Protein-protein interaction between the transcriptional repressor E4BP4 and the TBP-binding protein Dr1.</title>
        <authorList>
            <person name="Cowell I.G."/>
            <person name="Hurst H.C."/>
        </authorList>
    </citation>
    <scope>FUNCTION</scope>
    <scope>INTERACTION WITH DR1</scope>
    <scope>MUTAGENESIS OF LYS-330 AND LYS-332</scope>
</reference>
<reference key="10">
    <citation type="journal article" date="2000" name="Hum. Genet.">
        <title>Exclusion of NFIL3 as the gene causing hereditary sensory neuropathy type I by mutation analysis.</title>
        <authorList>
            <person name="Hulme D.J."/>
            <person name="Blair I.P."/>
            <person name="Dawkins J.L."/>
            <person name="Nicholson G.A."/>
        </authorList>
    </citation>
    <scope>TISSUE SPECIFICITY</scope>
</reference>
<reference key="11">
    <citation type="journal article" date="2006" name="Cell">
        <title>Global, in vivo, and site-specific phosphorylation dynamics in signaling networks.</title>
        <authorList>
            <person name="Olsen J.V."/>
            <person name="Blagoev B."/>
            <person name="Gnad F."/>
            <person name="Macek B."/>
            <person name="Kumar C."/>
            <person name="Mortensen P."/>
            <person name="Mann M."/>
        </authorList>
    </citation>
    <scope>PHOSPHORYLATION [LARGE SCALE ANALYSIS] AT SER-301</scope>
    <scope>IDENTIFICATION BY MASS SPECTROMETRY [LARGE SCALE ANALYSIS]</scope>
    <source>
        <tissue>Cervix carcinoma</tissue>
    </source>
</reference>
<reference key="12">
    <citation type="journal article" date="2008" name="Proc. Natl. Acad. Sci. U.S.A.">
        <title>A quantitative atlas of mitotic phosphorylation.</title>
        <authorList>
            <person name="Dephoure N."/>
            <person name="Zhou C."/>
            <person name="Villen J."/>
            <person name="Beausoleil S.A."/>
            <person name="Bakalarski C.E."/>
            <person name="Elledge S.J."/>
            <person name="Gygi S.P."/>
        </authorList>
    </citation>
    <scope>IDENTIFICATION BY MASS SPECTROMETRY [LARGE SCALE ANALYSIS]</scope>
    <source>
        <tissue>Cervix carcinoma</tissue>
    </source>
</reference>
<reference key="13">
    <citation type="journal article" date="2009" name="Sci. Signal.">
        <title>Quantitative phosphoproteomic analysis of T cell receptor signaling reveals system-wide modulation of protein-protein interactions.</title>
        <authorList>
            <person name="Mayya V."/>
            <person name="Lundgren D.H."/>
            <person name="Hwang S.-I."/>
            <person name="Rezaul K."/>
            <person name="Wu L."/>
            <person name="Eng J.K."/>
            <person name="Rodionov V."/>
            <person name="Han D.K."/>
        </authorList>
    </citation>
    <scope>IDENTIFICATION BY MASS SPECTROMETRY [LARGE SCALE ANALYSIS]</scope>
    <source>
        <tissue>Leukemic T-cell</tissue>
    </source>
</reference>
<reference key="14">
    <citation type="journal article" date="2010" name="Sci. Signal.">
        <title>Quantitative phosphoproteomics reveals widespread full phosphorylation site occupancy during mitosis.</title>
        <authorList>
            <person name="Olsen J.V."/>
            <person name="Vermeulen M."/>
            <person name="Santamaria A."/>
            <person name="Kumar C."/>
            <person name="Miller M.L."/>
            <person name="Jensen L.J."/>
            <person name="Gnad F."/>
            <person name="Cox J."/>
            <person name="Jensen T.S."/>
            <person name="Nigg E.A."/>
            <person name="Brunak S."/>
            <person name="Mann M."/>
        </authorList>
    </citation>
    <scope>PHOSPHORYLATION [LARGE SCALE ANALYSIS] AT SER-301 AND SER-353</scope>
    <scope>IDENTIFICATION BY MASS SPECTROMETRY [LARGE SCALE ANALYSIS]</scope>
    <source>
        <tissue>Cervix carcinoma</tissue>
    </source>
</reference>
<reference key="15">
    <citation type="journal article" date="2013" name="J. Proteome Res.">
        <title>Toward a comprehensive characterization of a human cancer cell phosphoproteome.</title>
        <authorList>
            <person name="Zhou H."/>
            <person name="Di Palma S."/>
            <person name="Preisinger C."/>
            <person name="Peng M."/>
            <person name="Polat A.N."/>
            <person name="Heck A.J."/>
            <person name="Mohammed S."/>
        </authorList>
    </citation>
    <scope>PHOSPHORYLATION [LARGE SCALE ANALYSIS] AT SER-301 AND SER-353</scope>
    <scope>IDENTIFICATION BY MASS SPECTROMETRY [LARGE SCALE ANALYSIS]</scope>
    <source>
        <tissue>Cervix carcinoma</tissue>
        <tissue>Erythroleukemia</tissue>
    </source>
</reference>
<reference key="16">
    <citation type="journal article" date="2013" name="Proc. Natl. Acad. Sci. U.S.A.">
        <title>Epigenetic control of natural killer cell maturation by histone H2A deubiquitinase, MYSM1.</title>
        <authorList>
            <person name="Nandakumar V."/>
            <person name="Chou Y."/>
            <person name="Zang L."/>
            <person name="Huang X.F."/>
            <person name="Chen S.Y."/>
        </authorList>
    </citation>
    <scope>INTERACTION WITH MYSM1</scope>
</reference>
<reference key="17">
    <citation type="journal article" date="2014" name="Nat. Struct. Mol. Biol.">
        <title>Uncovering global SUMOylation signaling networks in a site-specific manner.</title>
        <authorList>
            <person name="Hendriks I.A."/>
            <person name="D'Souza R.C."/>
            <person name="Yang B."/>
            <person name="Verlaan-de Vries M."/>
            <person name="Mann M."/>
            <person name="Vertegaal A.C."/>
        </authorList>
    </citation>
    <scope>SUMOYLATION [LARGE SCALE ANALYSIS] AT LYS-219; LYS-337; LYS-394 AND LYS-406</scope>
    <scope>IDENTIFICATION BY MASS SPECTROMETRY [LARGE SCALE ANALYSIS]</scope>
</reference>
<reference key="18">
    <citation type="journal article" date="2014" name="Proc. Natl. Acad. Sci. U.S.A.">
        <title>Mapping of SUMO sites and analysis of SUMOylation changes induced by external stimuli.</title>
        <authorList>
            <person name="Impens F."/>
            <person name="Radoshevich L."/>
            <person name="Cossart P."/>
            <person name="Ribet D."/>
        </authorList>
    </citation>
    <scope>SUMOYLATION [LARGE SCALE ANALYSIS] AT LYS-219</scope>
    <scope>IDENTIFICATION BY MASS SPECTROMETRY [LARGE SCALE ANALYSIS]</scope>
</reference>
<reference key="19">
    <citation type="journal article" date="2015" name="Cell Rep.">
        <title>SUMO-2 orchestrates chromatin modifiers in response to DNA damage.</title>
        <authorList>
            <person name="Hendriks I.A."/>
            <person name="Treffers L.W."/>
            <person name="Verlaan-de Vries M."/>
            <person name="Olsen J.V."/>
            <person name="Vertegaal A.C."/>
        </authorList>
    </citation>
    <scope>SUMOYLATION [LARGE SCALE ANALYSIS] AT LYS-219; LYS-337; LYS-394; LYS-434 AND LYS-448</scope>
    <scope>IDENTIFICATION BY MASS SPECTROMETRY [LARGE SCALE ANALYSIS]</scope>
</reference>
<reference key="20">
    <citation type="journal article" date="2015" name="Mol. Cell. Proteomics">
        <title>System-wide analysis of SUMOylation dynamics in response to replication stress reveals novel small ubiquitin-like modified target proteins and acceptor lysines relevant for genome stability.</title>
        <authorList>
            <person name="Xiao Z."/>
            <person name="Chang J.G."/>
            <person name="Hendriks I.A."/>
            <person name="Sigurdsson J.O."/>
            <person name="Olsen J.V."/>
            <person name="Vertegaal A.C."/>
        </authorList>
    </citation>
    <scope>SUMOYLATION [LARGE SCALE ANALYSIS] AT LYS-219 AND LYS-337</scope>
    <scope>IDENTIFICATION BY MASS SPECTROMETRY [LARGE SCALE ANALYSIS]</scope>
</reference>
<reference key="21">
    <citation type="journal article" date="2017" name="Nat. Struct. Mol. Biol.">
        <title>Site-specific mapping of the human SUMO proteome reveals co-modification with phosphorylation.</title>
        <authorList>
            <person name="Hendriks I.A."/>
            <person name="Lyon D."/>
            <person name="Young C."/>
            <person name="Jensen L.J."/>
            <person name="Vertegaal A.C."/>
            <person name="Nielsen M.L."/>
        </authorList>
    </citation>
    <scope>SUMOYLATION [LARGE SCALE ANALYSIS] AT LYS-24; LYS-214; LYS-219; LYS-306; LYS-314; LYS-326; LYS-332; LYS-337; LYS-350; LYS-360; LYS-394; LYS-401; LYS-406; LYS-412; LYS-419; LYS-424; LYS-434 AND LYS-448</scope>
    <scope>IDENTIFICATION BY MASS SPECTROMETRY [LARGE SCALE ANALYSIS]</scope>
</reference>
<protein>
    <recommendedName>
        <fullName>Nuclear factor interleukin-3-regulated protein</fullName>
    </recommendedName>
    <alternativeName>
        <fullName>E4 promoter-binding protein 4</fullName>
    </alternativeName>
    <alternativeName>
        <fullName>Interleukin-3 promoter transcriptional activator</fullName>
    </alternativeName>
    <alternativeName>
        <fullName>Interleukin-3-binding protein 1</fullName>
    </alternativeName>
    <alternativeName>
        <fullName>Transcriptional activator NF-IL3A</fullName>
    </alternativeName>
</protein>
<organism>
    <name type="scientific">Homo sapiens</name>
    <name type="common">Human</name>
    <dbReference type="NCBI Taxonomy" id="9606"/>
    <lineage>
        <taxon>Eukaryota</taxon>
        <taxon>Metazoa</taxon>
        <taxon>Chordata</taxon>
        <taxon>Craniata</taxon>
        <taxon>Vertebrata</taxon>
        <taxon>Euteleostomi</taxon>
        <taxon>Mammalia</taxon>
        <taxon>Eutheria</taxon>
        <taxon>Euarchontoglires</taxon>
        <taxon>Primates</taxon>
        <taxon>Haplorrhini</taxon>
        <taxon>Catarrhini</taxon>
        <taxon>Hominidae</taxon>
        <taxon>Homo</taxon>
    </lineage>
</organism>
<name>NFIL3_HUMAN</name>
<feature type="chain" id="PRO_0000292667" description="Nuclear factor interleukin-3-regulated protein">
    <location>
        <begin position="1"/>
        <end position="462"/>
    </location>
</feature>
<feature type="domain" description="bZIP" evidence="2">
    <location>
        <begin position="73"/>
        <end position="136"/>
    </location>
</feature>
<feature type="region of interest" description="Basic motif" evidence="2">
    <location>
        <begin position="79"/>
        <end position="95"/>
    </location>
</feature>
<feature type="region of interest" description="Leucine-zipper" evidence="2">
    <location>
        <begin position="99"/>
        <end position="106"/>
    </location>
</feature>
<feature type="region of interest" description="Disordered" evidence="3">
    <location>
        <begin position="189"/>
        <end position="237"/>
    </location>
</feature>
<feature type="region of interest" description="Disordered" evidence="3">
    <location>
        <begin position="258"/>
        <end position="302"/>
    </location>
</feature>
<feature type="region of interest" description="Necessary for transcriptional repression and sufficient for interaction with DR1" evidence="8">
    <location>
        <begin position="299"/>
        <end position="363"/>
    </location>
</feature>
<feature type="compositionally biased region" description="Polar residues" evidence="3">
    <location>
        <begin position="201"/>
        <end position="210"/>
    </location>
</feature>
<feature type="compositionally biased region" description="Basic and acidic residues" evidence="3">
    <location>
        <begin position="227"/>
        <end position="237"/>
    </location>
</feature>
<feature type="compositionally biased region" description="Polar residues" evidence="3">
    <location>
        <begin position="264"/>
        <end position="274"/>
    </location>
</feature>
<feature type="modified residue" description="Phosphoserine" evidence="10 11 12">
    <location>
        <position position="301"/>
    </location>
</feature>
<feature type="modified residue" description="Phosphoserine" evidence="11 12">
    <location>
        <position position="353"/>
    </location>
</feature>
<feature type="cross-link" description="Glycyl lysine isopeptide (Lys-Gly) (interchain with G-Cter in SUMO2)" evidence="17">
    <location>
        <position position="24"/>
    </location>
</feature>
<feature type="cross-link" description="Glycyl lysine isopeptide (Lys-Gly) (interchain with G-Cter in SUMO2)" evidence="17">
    <location>
        <position position="214"/>
    </location>
</feature>
<feature type="cross-link" description="Glycyl lysine isopeptide (Lys-Gly) (interchain with G-Cter in SUMO1); alternate" evidence="13">
    <location>
        <position position="219"/>
    </location>
</feature>
<feature type="cross-link" description="Glycyl lysine isopeptide (Lys-Gly) (interchain with G-Cter in SUMO2); alternate" evidence="13 14 15 16 17">
    <location>
        <position position="219"/>
    </location>
</feature>
<feature type="cross-link" description="Glycyl lysine isopeptide (Lys-Gly) (interchain with G-Cter in SUMO2)" evidence="17">
    <location>
        <position position="306"/>
    </location>
</feature>
<feature type="cross-link" description="Glycyl lysine isopeptide (Lys-Gly) (interchain with G-Cter in SUMO2)" evidence="17">
    <location>
        <position position="314"/>
    </location>
</feature>
<feature type="cross-link" description="Glycyl lysine isopeptide (Lys-Gly) (interchain with G-Cter in SUMO2)" evidence="17">
    <location>
        <position position="326"/>
    </location>
</feature>
<feature type="cross-link" description="Glycyl lysine isopeptide (Lys-Gly) (interchain with G-Cter in SUMO2)" evidence="17">
    <location>
        <position position="332"/>
    </location>
</feature>
<feature type="cross-link" description="Glycyl lysine isopeptide (Lys-Gly) (interchain with G-Cter in SUMO2)" evidence="14 15 16 17">
    <location>
        <position position="337"/>
    </location>
</feature>
<feature type="cross-link" description="Glycyl lysine isopeptide (Lys-Gly) (interchain with G-Cter in SUMO2)" evidence="17">
    <location>
        <position position="350"/>
    </location>
</feature>
<feature type="cross-link" description="Glycyl lysine isopeptide (Lys-Gly) (interchain with G-Cter in SUMO2)" evidence="17">
    <location>
        <position position="360"/>
    </location>
</feature>
<feature type="cross-link" description="Glycyl lysine isopeptide (Lys-Gly) (interchain with G-Cter in SUMO2)" evidence="14 16 17">
    <location>
        <position position="394"/>
    </location>
</feature>
<feature type="cross-link" description="Glycyl lysine isopeptide (Lys-Gly) (interchain with G-Cter in SUMO2)" evidence="17">
    <location>
        <position position="401"/>
    </location>
</feature>
<feature type="cross-link" description="Glycyl lysine isopeptide (Lys-Gly) (interchain with G-Cter in SUMO2)" evidence="14 17">
    <location>
        <position position="406"/>
    </location>
</feature>
<feature type="cross-link" description="Glycyl lysine isopeptide (Lys-Gly) (interchain with G-Cter in SUMO2)" evidence="17">
    <location>
        <position position="412"/>
    </location>
</feature>
<feature type="cross-link" description="Glycyl lysine isopeptide (Lys-Gly) (interchain with G-Cter in SUMO2)" evidence="17">
    <location>
        <position position="419"/>
    </location>
</feature>
<feature type="cross-link" description="Glycyl lysine isopeptide (Lys-Gly) (interchain with G-Cter in SUMO2)" evidence="17">
    <location>
        <position position="424"/>
    </location>
</feature>
<feature type="cross-link" description="Glycyl lysine isopeptide (Lys-Gly) (interchain with G-Cter in SUMO2)" evidence="16 17">
    <location>
        <position position="434"/>
    </location>
</feature>
<feature type="cross-link" description="Glycyl lysine isopeptide (Lys-Gly) (interchain with G-Cter in SUMO2)" evidence="16 17">
    <location>
        <position position="448"/>
    </location>
</feature>
<feature type="mutagenesis site" description="Interacts with DR1 and partially affects transcriptional repression; when associated with E-332." evidence="8">
    <original>K</original>
    <variation>A</variation>
    <location>
        <position position="330"/>
    </location>
</feature>
<feature type="mutagenesis site" description="Does not interact with DR1 and drastically affects transcriptional repression; when associated with E-332." evidence="8">
    <original>K</original>
    <variation>E</variation>
    <location>
        <position position="330"/>
    </location>
</feature>
<feature type="mutagenesis site" description="Interacts with DR1 and partially affects transcriptional repression; when associated with E-330." evidence="8">
    <original>K</original>
    <variation>A</variation>
    <location>
        <position position="332"/>
    </location>
</feature>
<feature type="mutagenesis site" description="Does not interact with DR1 and drastically affects transcriptional repression; when associated with E-330." evidence="8">
    <original>K</original>
    <variation>E</variation>
    <location>
        <position position="332"/>
    </location>
</feature>
<feature type="sequence conflict" description="In Ref. 1; AAA93067/CAA45597 and 2; AAB35410." evidence="9" ref="1 2">
    <original>EL</original>
    <variation>DV</variation>
    <location>
        <begin position="44"/>
        <end position="45"/>
    </location>
</feature>
<feature type="sequence conflict" description="In Ref. 4; CAG46846." evidence="9" ref="4">
    <original>F</original>
    <variation>S</variation>
    <location>
        <position position="149"/>
    </location>
</feature>
<feature type="sequence conflict" description="In Ref. 1; AAA93067/CAA45597 and 2; AAB35410." evidence="9" ref="1 2">
    <original>R</original>
    <variation>G</variation>
    <location>
        <position position="273"/>
    </location>
</feature>
<feature type="helix" evidence="18">
    <location>
        <begin position="69"/>
        <end position="71"/>
    </location>
</feature>
<feature type="helix" evidence="18">
    <location>
        <begin position="74"/>
        <end position="125"/>
    </location>
</feature>
<feature type="helix" evidence="19">
    <location>
        <begin position="131"/>
        <end position="146"/>
    </location>
</feature>
<accession>Q16649</accession>
<accession>B2R9Y8</accession>
<accession>Q14211</accession>
<accession>Q6FGQ8</accession>
<accession>Q96HS0</accession>
<proteinExistence type="evidence at protein level"/>
<sequence>MQLRKMQTVKKEQASLDASSNVDKMMVLNSALTEVSEDSTTGEELLLSEGSVGKNKSSACRRKREFIPDEKKDAMYWEKRRKNNEAAKRSREKRRLNDLVLENKLIALGEENATLKAELLSLKLKFGLISSTAYAQEIQKLSNSTAVYFQDYQTSKSNVSSFVDEHEPSMVSSSCISVIKHSPQSSLSDVSEVSSVEHTQESSVQGSCRSPENKFQIIKQEPMELESYTREPRDDRGSYTASIYQNYMGNSFSGYSHSPPLLQVNRSSSNSPRTSETDDGVVGKSSDGEDEQQVPKGPIHSPVELKHVHATVVKVPEVNSSALPHKLRIKAKAMQIKVEAFDNEFEATQKLSSPIDMTSKRHFELEKHSAPSMVHSSLTPFSVQVTNIQDWSLKSEHWHQKELSGKTQNSFKTGVVEMKDSGYKVSDPENLYLKQGIANLSAEVVSLKRLIATQPISASDSG</sequence>
<comment type="function">
    <text evidence="1 5 7 8">Acts as a transcriptional regulator that recognizes and binds to the sequence 5'-[GA]TTA[CT]GTAA[CT]-3', a sequence present in many cellular and viral promoters. Represses transcription from promoters with activating transcription factor (ATF) sites. Represses promoter activity in osteoblasts (By similarity). Represses transcriptional activity of PER1 (By similarity). Represses transcriptional activity of PER2 via the B-site on the promoter (By similarity). Activates transcription from the interleukin-3 promoter in T-cells. Competes for the same consensus-binding site with PAR DNA-binding factors (DBP, HLF and TEF) (By similarity). Component of the circadian clock that acts as a negative regulator for the circadian expression of PER2 oscillation in the cell-autonomous core clock (By similarity). Protects pro-B cells from programmed cell death (By similarity). Represses the transcription of CYP2A5 (By similarity). Positively regulates the expression and activity of CES2 by antagonizing the repressive action of NR1D1 on CES2 (By similarity). Required for the development of natural killer cell precursors (By similarity).</text>
</comment>
<comment type="subunit">
    <text evidence="1 5 6 8">Homodimer (PubMed:1620116). Binds DNA as a dimer (PubMed:1620116). Interacts with DR1 (PubMed:8836190). Interacts with PER2 and CRY2 (By similarity). Interacts with NR0B2 (By similarity). Interacts with MYSM1 (PubMed:24062447).</text>
</comment>
<comment type="interaction">
    <interactant intactId="EBI-3951858">
        <id>Q16649</id>
    </interactant>
    <interactant intactId="EBI-746752">
        <id>Q9Y2J4</id>
        <label>AMOTL2</label>
    </interactant>
    <organismsDiffer>false</organismsDiffer>
    <experiments>4</experiments>
</comment>
<comment type="interaction">
    <interactant intactId="EBI-3951858">
        <id>Q16649</id>
    </interactant>
    <interactant intactId="EBI-10187270">
        <id>Q9Y2J4-4</id>
        <label>AMOTL2</label>
    </interactant>
    <organismsDiffer>false</organismsDiffer>
    <experiments>3</experiments>
</comment>
<comment type="interaction">
    <interactant intactId="EBI-3951858">
        <id>Q16649</id>
    </interactant>
    <interactant intactId="EBI-852794">
        <id>P18846</id>
        <label>ATF1</label>
    </interactant>
    <organismsDiffer>false</organismsDiffer>
    <experiments>3</experiments>
</comment>
<comment type="interaction">
    <interactant intactId="EBI-3951858">
        <id>Q16649</id>
    </interactant>
    <interactant intactId="EBI-711855">
        <id>P16220</id>
        <label>CREB1</label>
    </interactant>
    <organismsDiffer>false</organismsDiffer>
    <experiments>3</experiments>
</comment>
<comment type="interaction">
    <interactant intactId="EBI-3951858">
        <id>Q16649</id>
    </interactant>
    <interactant intactId="EBI-852194">
        <id>Q68CJ9</id>
        <label>CREB3L3</label>
    </interactant>
    <organismsDiffer>false</organismsDiffer>
    <experiments>2</experiments>
</comment>
<comment type="interaction">
    <interactant intactId="EBI-3951858">
        <id>Q16649</id>
    </interactant>
    <interactant intactId="EBI-742651">
        <id>P35638</id>
        <label>DDIT3</label>
    </interactant>
    <organismsDiffer>false</organismsDiffer>
    <experiments>2</experiments>
</comment>
<comment type="interaction">
    <interactant intactId="EBI-3951858">
        <id>Q16649</id>
    </interactant>
    <interactant intactId="EBI-2548508">
        <id>Q96IK5</id>
        <label>GMCL1</label>
    </interactant>
    <organismsDiffer>false</organismsDiffer>
    <experiments>3</experiments>
</comment>
<comment type="interaction">
    <interactant intactId="EBI-3951858">
        <id>Q16649</id>
    </interactant>
    <interactant intactId="EBI-7116203">
        <id>O75031</id>
        <label>HSF2BP</label>
    </interactant>
    <organismsDiffer>false</organismsDiffer>
    <experiments>3</experiments>
</comment>
<comment type="interaction">
    <interactant intactId="EBI-3951858">
        <id>Q16649</id>
    </interactant>
    <interactant intactId="EBI-721128">
        <id>Q9ULX9</id>
        <label>MAFF</label>
    </interactant>
    <organismsDiffer>false</organismsDiffer>
    <experiments>2</experiments>
</comment>
<comment type="interaction">
    <interactant intactId="EBI-3951858">
        <id>Q16649</id>
    </interactant>
    <interactant intactId="EBI-713514">
        <id>O15525</id>
        <label>MAFG</label>
    </interactant>
    <organismsDiffer>false</organismsDiffer>
    <experiments>2</experiments>
</comment>
<comment type="interaction">
    <interactant intactId="EBI-3951858">
        <id>Q16649</id>
    </interactant>
    <interactant intactId="EBI-3951858">
        <id>Q16649</id>
        <label>NFIL3</label>
    </interactant>
    <organismsDiffer>false</organismsDiffer>
    <experiments>2</experiments>
</comment>
<comment type="interaction">
    <interactant intactId="EBI-3951858">
        <id>Q16649</id>
    </interactant>
    <interactant intactId="EBI-11524542">
        <id>O76083-2</id>
        <label>PDE9A</label>
    </interactant>
    <organismsDiffer>false</organismsDiffer>
    <experiments>3</experiments>
</comment>
<comment type="interaction">
    <interactant intactId="EBI-3951858">
        <id>Q16649</id>
    </interactant>
    <interactant intactId="EBI-10232538">
        <id>Q8WWB5</id>
        <label>PIH1D2</label>
    </interactant>
    <organismsDiffer>false</organismsDiffer>
    <experiments>3</experiments>
</comment>
<comment type="interaction">
    <interactant intactId="EBI-3951858">
        <id>Q16649</id>
    </interactant>
    <interactant intactId="EBI-726876">
        <id>Q6NUQ1</id>
        <label>RINT1</label>
    </interactant>
    <organismsDiffer>false</organismsDiffer>
    <experiments>3</experiments>
</comment>
<comment type="interaction">
    <interactant intactId="EBI-3951858">
        <id>Q16649</id>
    </interactant>
    <interactant intactId="EBI-355744">
        <id>Q12933</id>
        <label>TRAF2</label>
    </interactant>
    <organismsDiffer>false</organismsDiffer>
    <experiments>3</experiments>
</comment>
<comment type="interaction">
    <interactant intactId="EBI-3951858">
        <id>Q16649</id>
    </interactant>
    <interactant intactId="EBI-10889526">
        <id>Q9DGW5</id>
        <label>MDV005</label>
    </interactant>
    <organismsDiffer>true</organismsDiffer>
    <experiments>3</experiments>
</comment>
<comment type="subcellular location">
    <subcellularLocation>
        <location evidence="2">Nucleus</location>
    </subcellularLocation>
</comment>
<comment type="tissue specificity">
    <text evidence="4">Expressed in bladder stomach, thyroid, spinal cord, lymph node, trachea, adrenal gland, bone marrow and muscle.</text>
</comment>
<comment type="induction">
    <text evidence="7">Up-regulated by PHA or TPA.</text>
</comment>
<comment type="similarity">
    <text evidence="9">Belongs to the bZIP family. NFIL3 subfamily.</text>
</comment>
<dbReference type="EMBL" id="U26173">
    <property type="protein sequence ID" value="AAA93067.1"/>
    <property type="molecule type" value="mRNA"/>
</dbReference>
<dbReference type="EMBL" id="X64318">
    <property type="protein sequence ID" value="CAA45597.1"/>
    <property type="molecule type" value="mRNA"/>
</dbReference>
<dbReference type="EMBL" id="S79880">
    <property type="protein sequence ID" value="AAB35410.1"/>
    <property type="molecule type" value="mRNA"/>
</dbReference>
<dbReference type="EMBL" id="EF028070">
    <property type="protein sequence ID" value="ABK15691.1"/>
    <property type="molecule type" value="Genomic_DNA"/>
</dbReference>
<dbReference type="EMBL" id="CR542049">
    <property type="protein sequence ID" value="CAG46846.1"/>
    <property type="molecule type" value="mRNA"/>
</dbReference>
<dbReference type="EMBL" id="AK313970">
    <property type="protein sequence ID" value="BAG36685.1"/>
    <property type="molecule type" value="mRNA"/>
</dbReference>
<dbReference type="EMBL" id="AL353764">
    <property type="status" value="NOT_ANNOTATED_CDS"/>
    <property type="molecule type" value="Genomic_DNA"/>
</dbReference>
<dbReference type="EMBL" id="CH471089">
    <property type="protein sequence ID" value="EAW62796.1"/>
    <property type="molecule type" value="Genomic_DNA"/>
</dbReference>
<dbReference type="EMBL" id="BC008197">
    <property type="protein sequence ID" value="AAH08197.1"/>
    <property type="molecule type" value="mRNA"/>
</dbReference>
<dbReference type="CCDS" id="CCDS6690.1"/>
<dbReference type="PIR" id="G01804">
    <property type="entry name" value="G01804"/>
</dbReference>
<dbReference type="RefSeq" id="NP_001276928.1">
    <property type="nucleotide sequence ID" value="NM_001289999.2"/>
</dbReference>
<dbReference type="RefSeq" id="NP_001276929.1">
    <property type="nucleotide sequence ID" value="NM_001290000.2"/>
</dbReference>
<dbReference type="RefSeq" id="NP_005375.2">
    <property type="nucleotide sequence ID" value="NM_005384.2"/>
</dbReference>
<dbReference type="RefSeq" id="XP_016870232.1">
    <property type="nucleotide sequence ID" value="XM_017014743.2"/>
</dbReference>
<dbReference type="RefSeq" id="XP_016870233.1">
    <property type="nucleotide sequence ID" value="XM_017014744.2"/>
</dbReference>
<dbReference type="RefSeq" id="XP_047279378.1">
    <property type="nucleotide sequence ID" value="XM_047423422.1"/>
</dbReference>
<dbReference type="RefSeq" id="XP_047279379.1">
    <property type="nucleotide sequence ID" value="XM_047423423.1"/>
</dbReference>
<dbReference type="RefSeq" id="XP_047279380.1">
    <property type="nucleotide sequence ID" value="XM_047423424.1"/>
</dbReference>
<dbReference type="RefSeq" id="XP_047279381.1">
    <property type="nucleotide sequence ID" value="XM_047423425.1"/>
</dbReference>
<dbReference type="RefSeq" id="XP_047279382.1">
    <property type="nucleotide sequence ID" value="XM_047423426.1"/>
</dbReference>
<dbReference type="RefSeq" id="XP_054218973.1">
    <property type="nucleotide sequence ID" value="XM_054362998.1"/>
</dbReference>
<dbReference type="RefSeq" id="XP_054218974.1">
    <property type="nucleotide sequence ID" value="XM_054362999.1"/>
</dbReference>
<dbReference type="RefSeq" id="XP_054218975.1">
    <property type="nucleotide sequence ID" value="XM_054363000.1"/>
</dbReference>
<dbReference type="RefSeq" id="XP_054218976.1">
    <property type="nucleotide sequence ID" value="XM_054363001.1"/>
</dbReference>
<dbReference type="PDB" id="8K86">
    <property type="method" value="X-ray"/>
    <property type="resolution" value="2.06 A"/>
    <property type="chains" value="A/B=68-136"/>
</dbReference>
<dbReference type="PDB" id="8K89">
    <property type="method" value="X-ray"/>
    <property type="resolution" value="2.10 A"/>
    <property type="chains" value="A/B=68-161"/>
</dbReference>
<dbReference type="PDB" id="8K8A">
    <property type="method" value="X-ray"/>
    <property type="resolution" value="2.07 A"/>
    <property type="chains" value="A/B=68-136"/>
</dbReference>
<dbReference type="PDBsum" id="8K86"/>
<dbReference type="PDBsum" id="8K89"/>
<dbReference type="PDBsum" id="8K8A"/>
<dbReference type="SMR" id="Q16649"/>
<dbReference type="BioGRID" id="110855">
    <property type="interactions" value="36"/>
</dbReference>
<dbReference type="ComplexPortal" id="CPX-6404">
    <property type="entry name" value="bZIP transcription factor complex, ATF1-NFIL3"/>
</dbReference>
<dbReference type="ComplexPortal" id="CPX-7017">
    <property type="entry name" value="bZIP transcription factor complex, BATF-NFIL3"/>
</dbReference>
<dbReference type="FunCoup" id="Q16649">
    <property type="interactions" value="1410"/>
</dbReference>
<dbReference type="IntAct" id="Q16649">
    <property type="interactions" value="30"/>
</dbReference>
<dbReference type="MINT" id="Q16649"/>
<dbReference type="STRING" id="9606.ENSP00000297689"/>
<dbReference type="iPTMnet" id="Q16649"/>
<dbReference type="PhosphoSitePlus" id="Q16649"/>
<dbReference type="BioMuta" id="NFIL3"/>
<dbReference type="DMDM" id="150385077"/>
<dbReference type="jPOST" id="Q16649"/>
<dbReference type="MassIVE" id="Q16649"/>
<dbReference type="PaxDb" id="9606-ENSP00000297689"/>
<dbReference type="PeptideAtlas" id="Q16649"/>
<dbReference type="ProteomicsDB" id="61000"/>
<dbReference type="Pumba" id="Q16649"/>
<dbReference type="Antibodypedia" id="926">
    <property type="antibodies" value="382 antibodies from 39 providers"/>
</dbReference>
<dbReference type="DNASU" id="4783"/>
<dbReference type="Ensembl" id="ENST00000297689.4">
    <property type="protein sequence ID" value="ENSP00000297689.2"/>
    <property type="gene ID" value="ENSG00000165030.5"/>
</dbReference>
<dbReference type="Ensembl" id="ENST00000718345.1">
    <property type="protein sequence ID" value="ENSP00000520782.1"/>
    <property type="gene ID" value="ENSG00000165030.5"/>
</dbReference>
<dbReference type="GeneID" id="4783"/>
<dbReference type="KEGG" id="hsa:4783"/>
<dbReference type="MANE-Select" id="ENST00000297689.4">
    <property type="protein sequence ID" value="ENSP00000297689.2"/>
    <property type="RefSeq nucleotide sequence ID" value="NM_005384.3"/>
    <property type="RefSeq protein sequence ID" value="NP_005375.2"/>
</dbReference>
<dbReference type="UCSC" id="uc004arh.3">
    <property type="organism name" value="human"/>
</dbReference>
<dbReference type="AGR" id="HGNC:7787"/>
<dbReference type="CTD" id="4783"/>
<dbReference type="DisGeNET" id="4783"/>
<dbReference type="GeneCards" id="NFIL3"/>
<dbReference type="HGNC" id="HGNC:7787">
    <property type="gene designation" value="NFIL3"/>
</dbReference>
<dbReference type="HPA" id="ENSG00000165030">
    <property type="expression patterns" value="Low tissue specificity"/>
</dbReference>
<dbReference type="MIM" id="605327">
    <property type="type" value="gene"/>
</dbReference>
<dbReference type="neXtProt" id="NX_Q16649"/>
<dbReference type="OpenTargets" id="ENSG00000165030"/>
<dbReference type="PharmGKB" id="PA31593"/>
<dbReference type="VEuPathDB" id="HostDB:ENSG00000165030"/>
<dbReference type="eggNOG" id="KOG3119">
    <property type="taxonomic scope" value="Eukaryota"/>
</dbReference>
<dbReference type="GeneTree" id="ENSGT00940000160540"/>
<dbReference type="HOGENOM" id="CLU_052045_0_0_1"/>
<dbReference type="InParanoid" id="Q16649"/>
<dbReference type="OMA" id="PVDMTSK"/>
<dbReference type="OrthoDB" id="6151507at2759"/>
<dbReference type="PAN-GO" id="Q16649">
    <property type="GO annotations" value="3 GO annotations based on evolutionary models"/>
</dbReference>
<dbReference type="PhylomeDB" id="Q16649"/>
<dbReference type="TreeFam" id="TF328374"/>
<dbReference type="PathwayCommons" id="Q16649"/>
<dbReference type="Reactome" id="R-HSA-400253">
    <property type="pathway name" value="Circadian Clock"/>
</dbReference>
<dbReference type="SignaLink" id="Q16649"/>
<dbReference type="SIGNOR" id="Q16649"/>
<dbReference type="BioGRID-ORCS" id="4783">
    <property type="hits" value="17 hits in 1178 CRISPR screens"/>
</dbReference>
<dbReference type="ChiTaRS" id="NFIL3">
    <property type="organism name" value="human"/>
</dbReference>
<dbReference type="GeneWiki" id="NFIL3"/>
<dbReference type="GenomeRNAi" id="4783"/>
<dbReference type="Pharos" id="Q16649">
    <property type="development level" value="Tbio"/>
</dbReference>
<dbReference type="PRO" id="PR:Q16649"/>
<dbReference type="Proteomes" id="UP000005640">
    <property type="component" value="Chromosome 9"/>
</dbReference>
<dbReference type="RNAct" id="Q16649">
    <property type="molecule type" value="protein"/>
</dbReference>
<dbReference type="Bgee" id="ENSG00000165030">
    <property type="expression patterns" value="Expressed in vena cava and 202 other cell types or tissues"/>
</dbReference>
<dbReference type="ExpressionAtlas" id="Q16649">
    <property type="expression patterns" value="baseline and differential"/>
</dbReference>
<dbReference type="GO" id="GO:0000785">
    <property type="term" value="C:chromatin"/>
    <property type="evidence" value="ECO:0000247"/>
    <property type="project" value="NTNU_SB"/>
</dbReference>
<dbReference type="GO" id="GO:0005634">
    <property type="term" value="C:nucleus"/>
    <property type="evidence" value="ECO:0000318"/>
    <property type="project" value="GO_Central"/>
</dbReference>
<dbReference type="GO" id="GO:0090575">
    <property type="term" value="C:RNA polymerase II transcription regulator complex"/>
    <property type="evidence" value="ECO:0000353"/>
    <property type="project" value="ComplexPortal"/>
</dbReference>
<dbReference type="GO" id="GO:0003700">
    <property type="term" value="F:DNA-binding transcription factor activity"/>
    <property type="evidence" value="ECO:0000304"/>
    <property type="project" value="ProtInc"/>
</dbReference>
<dbReference type="GO" id="GO:0000981">
    <property type="term" value="F:DNA-binding transcription factor activity, RNA polymerase II-specific"/>
    <property type="evidence" value="ECO:0000247"/>
    <property type="project" value="NTNU_SB"/>
</dbReference>
<dbReference type="GO" id="GO:0001227">
    <property type="term" value="F:DNA-binding transcription repressor activity, RNA polymerase II-specific"/>
    <property type="evidence" value="ECO:0000314"/>
    <property type="project" value="GO_Central"/>
</dbReference>
<dbReference type="GO" id="GO:0042802">
    <property type="term" value="F:identical protein binding"/>
    <property type="evidence" value="ECO:0000353"/>
    <property type="project" value="IntAct"/>
</dbReference>
<dbReference type="GO" id="GO:0000978">
    <property type="term" value="F:RNA polymerase II cis-regulatory region sequence-specific DNA binding"/>
    <property type="evidence" value="ECO:0000314"/>
    <property type="project" value="GO_Central"/>
</dbReference>
<dbReference type="GO" id="GO:0000977">
    <property type="term" value="F:RNA polymerase II transcription regulatory region sequence-specific DNA binding"/>
    <property type="evidence" value="ECO:0000314"/>
    <property type="project" value="BHF-UCL"/>
</dbReference>
<dbReference type="GO" id="GO:0071353">
    <property type="term" value="P:cellular response to interleukin-4"/>
    <property type="evidence" value="ECO:0007669"/>
    <property type="project" value="Ensembl"/>
</dbReference>
<dbReference type="GO" id="GO:0007623">
    <property type="term" value="P:circadian rhythm"/>
    <property type="evidence" value="ECO:0000318"/>
    <property type="project" value="GO_Central"/>
</dbReference>
<dbReference type="GO" id="GO:0006955">
    <property type="term" value="P:immune response"/>
    <property type="evidence" value="ECO:0000304"/>
    <property type="project" value="ProtInc"/>
</dbReference>
<dbReference type="GO" id="GO:0001779">
    <property type="term" value="P:natural killer cell differentiation"/>
    <property type="evidence" value="ECO:0000250"/>
    <property type="project" value="UniProtKB"/>
</dbReference>
<dbReference type="GO" id="GO:0045892">
    <property type="term" value="P:negative regulation of DNA-templated transcription"/>
    <property type="evidence" value="ECO:0000314"/>
    <property type="project" value="GO_Central"/>
</dbReference>
<dbReference type="GO" id="GO:0000122">
    <property type="term" value="P:negative regulation of transcription by RNA polymerase II"/>
    <property type="evidence" value="ECO:0000315"/>
    <property type="project" value="BHF-UCL"/>
</dbReference>
<dbReference type="GO" id="GO:0045893">
    <property type="term" value="P:positive regulation of DNA-templated transcription"/>
    <property type="evidence" value="ECO:0000250"/>
    <property type="project" value="UniProtKB"/>
</dbReference>
<dbReference type="GO" id="GO:0010628">
    <property type="term" value="P:positive regulation of gene expression"/>
    <property type="evidence" value="ECO:0007669"/>
    <property type="project" value="Ensembl"/>
</dbReference>
<dbReference type="GO" id="GO:0006355">
    <property type="term" value="P:regulation of DNA-templated transcription"/>
    <property type="evidence" value="ECO:0000318"/>
    <property type="project" value="GO_Central"/>
</dbReference>
<dbReference type="GO" id="GO:0006357">
    <property type="term" value="P:regulation of transcription by RNA polymerase II"/>
    <property type="evidence" value="ECO:0000303"/>
    <property type="project" value="ComplexPortal"/>
</dbReference>
<dbReference type="GO" id="GO:0006366">
    <property type="term" value="P:transcription by RNA polymerase II"/>
    <property type="evidence" value="ECO:0000304"/>
    <property type="project" value="ProtInc"/>
</dbReference>
<dbReference type="CDD" id="cd14694">
    <property type="entry name" value="bZIP_NFIL3"/>
    <property type="match status" value="1"/>
</dbReference>
<dbReference type="FunFam" id="1.20.5.170:FF:000025">
    <property type="entry name" value="nuclear factor interleukin-3-regulated protein-like"/>
    <property type="match status" value="1"/>
</dbReference>
<dbReference type="Gene3D" id="1.20.5.170">
    <property type="match status" value="1"/>
</dbReference>
<dbReference type="InterPro" id="IPR004827">
    <property type="entry name" value="bZIP"/>
</dbReference>
<dbReference type="InterPro" id="IPR046347">
    <property type="entry name" value="bZIP_sf"/>
</dbReference>
<dbReference type="InterPro" id="IPR047229">
    <property type="entry name" value="NFIL3-like"/>
</dbReference>
<dbReference type="InterPro" id="IPR047106">
    <property type="entry name" value="NFIL3-like_bZIP"/>
</dbReference>
<dbReference type="InterPro" id="IPR016743">
    <property type="entry name" value="NFIL3/E4BP4"/>
</dbReference>
<dbReference type="InterPro" id="IPR010533">
    <property type="entry name" value="Vert_IL3-reg_TF"/>
</dbReference>
<dbReference type="PANTHER" id="PTHR15284">
    <property type="entry name" value="NUCLEAR FACTOR INTERLEUKIN-3-REGULATED PROTEIN"/>
    <property type="match status" value="1"/>
</dbReference>
<dbReference type="PANTHER" id="PTHR15284:SF1">
    <property type="entry name" value="NUCLEAR FACTOR INTERLEUKIN-3-REGULATED PROTEIN"/>
    <property type="match status" value="1"/>
</dbReference>
<dbReference type="Pfam" id="PF07716">
    <property type="entry name" value="bZIP_2"/>
    <property type="match status" value="1"/>
</dbReference>
<dbReference type="Pfam" id="PF06529">
    <property type="entry name" value="Vert_IL3-reg_TF"/>
    <property type="match status" value="1"/>
</dbReference>
<dbReference type="PIRSF" id="PIRSF019029">
    <property type="entry name" value="bZIP_E4BP4"/>
    <property type="match status" value="1"/>
</dbReference>
<dbReference type="SMART" id="SM00338">
    <property type="entry name" value="BRLZ"/>
    <property type="match status" value="1"/>
</dbReference>
<dbReference type="SUPFAM" id="SSF57959">
    <property type="entry name" value="Leucine zipper domain"/>
    <property type="match status" value="1"/>
</dbReference>
<dbReference type="PROSITE" id="PS50217">
    <property type="entry name" value="BZIP"/>
    <property type="match status" value="1"/>
</dbReference>
<dbReference type="PROSITE" id="PS00036">
    <property type="entry name" value="BZIP_BASIC"/>
    <property type="match status" value="1"/>
</dbReference>
<evidence type="ECO:0000250" key="1">
    <source>
        <dbReference type="UniProtKB" id="O08750"/>
    </source>
</evidence>
<evidence type="ECO:0000255" key="2">
    <source>
        <dbReference type="PROSITE-ProRule" id="PRU00978"/>
    </source>
</evidence>
<evidence type="ECO:0000256" key="3">
    <source>
        <dbReference type="SAM" id="MobiDB-lite"/>
    </source>
</evidence>
<evidence type="ECO:0000269" key="4">
    <source>
    </source>
</evidence>
<evidence type="ECO:0000269" key="5">
    <source>
    </source>
</evidence>
<evidence type="ECO:0000269" key="6">
    <source>
    </source>
</evidence>
<evidence type="ECO:0000269" key="7">
    <source>
    </source>
</evidence>
<evidence type="ECO:0000269" key="8">
    <source>
    </source>
</evidence>
<evidence type="ECO:0000305" key="9"/>
<evidence type="ECO:0007744" key="10">
    <source>
    </source>
</evidence>
<evidence type="ECO:0007744" key="11">
    <source>
    </source>
</evidence>
<evidence type="ECO:0007744" key="12">
    <source>
    </source>
</evidence>
<evidence type="ECO:0007744" key="13">
    <source>
    </source>
</evidence>
<evidence type="ECO:0007744" key="14">
    <source>
    </source>
</evidence>
<evidence type="ECO:0007744" key="15">
    <source>
    </source>
</evidence>
<evidence type="ECO:0007744" key="16">
    <source>
    </source>
</evidence>
<evidence type="ECO:0007744" key="17">
    <source>
    </source>
</evidence>
<evidence type="ECO:0007829" key="18">
    <source>
        <dbReference type="PDB" id="8K86"/>
    </source>
</evidence>
<evidence type="ECO:0007829" key="19">
    <source>
        <dbReference type="PDB" id="8K89"/>
    </source>
</evidence>
<gene>
    <name type="primary">NFIL3</name>
    <name type="synonym">E4BP4</name>
    <name type="synonym">IL3BP1</name>
</gene>
<keyword id="KW-0002">3D-structure</keyword>
<keyword id="KW-0010">Activator</keyword>
<keyword id="KW-0090">Biological rhythms</keyword>
<keyword id="KW-0238">DNA-binding</keyword>
<keyword id="KW-1017">Isopeptide bond</keyword>
<keyword id="KW-0539">Nucleus</keyword>
<keyword id="KW-0597">Phosphoprotein</keyword>
<keyword id="KW-1267">Proteomics identification</keyword>
<keyword id="KW-1185">Reference proteome</keyword>
<keyword id="KW-0678">Repressor</keyword>
<keyword id="KW-0804">Transcription</keyword>
<keyword id="KW-0805">Transcription regulation</keyword>
<keyword id="KW-0832">Ubl conjugation</keyword>